<gene>
    <name evidence="1" type="primary">rlmH</name>
    <name type="ordered locus">EUBELI_01221</name>
</gene>
<keyword id="KW-0963">Cytoplasm</keyword>
<keyword id="KW-0489">Methyltransferase</keyword>
<keyword id="KW-1185">Reference proteome</keyword>
<keyword id="KW-0698">rRNA processing</keyword>
<keyword id="KW-0949">S-adenosyl-L-methionine</keyword>
<keyword id="KW-0808">Transferase</keyword>
<evidence type="ECO:0000255" key="1">
    <source>
        <dbReference type="HAMAP-Rule" id="MF_00658"/>
    </source>
</evidence>
<accession>C4Z0V6</accession>
<dbReference type="EC" id="2.1.1.177" evidence="1"/>
<dbReference type="EMBL" id="CP001104">
    <property type="protein sequence ID" value="ACR72219.1"/>
    <property type="molecule type" value="Genomic_DNA"/>
</dbReference>
<dbReference type="RefSeq" id="WP_012739454.1">
    <property type="nucleotide sequence ID" value="NC_012778.1"/>
</dbReference>
<dbReference type="SMR" id="C4Z0V6"/>
<dbReference type="STRING" id="515620.EUBELI_01221"/>
<dbReference type="GeneID" id="41355940"/>
<dbReference type="KEGG" id="eel:EUBELI_01221"/>
<dbReference type="eggNOG" id="COG1576">
    <property type="taxonomic scope" value="Bacteria"/>
</dbReference>
<dbReference type="HOGENOM" id="CLU_100552_0_0_9"/>
<dbReference type="Proteomes" id="UP000001476">
    <property type="component" value="Chromosome"/>
</dbReference>
<dbReference type="GO" id="GO:0005737">
    <property type="term" value="C:cytoplasm"/>
    <property type="evidence" value="ECO:0007669"/>
    <property type="project" value="UniProtKB-SubCell"/>
</dbReference>
<dbReference type="GO" id="GO:0070038">
    <property type="term" value="F:rRNA (pseudouridine-N3-)-methyltransferase activity"/>
    <property type="evidence" value="ECO:0007669"/>
    <property type="project" value="UniProtKB-UniRule"/>
</dbReference>
<dbReference type="CDD" id="cd18081">
    <property type="entry name" value="RlmH-like"/>
    <property type="match status" value="1"/>
</dbReference>
<dbReference type="Gene3D" id="3.40.1280.10">
    <property type="match status" value="1"/>
</dbReference>
<dbReference type="HAMAP" id="MF_00658">
    <property type="entry name" value="23SrRNA_methyltr_H"/>
    <property type="match status" value="1"/>
</dbReference>
<dbReference type="InterPro" id="IPR029028">
    <property type="entry name" value="Alpha/beta_knot_MTases"/>
</dbReference>
<dbReference type="InterPro" id="IPR003742">
    <property type="entry name" value="RlmH-like"/>
</dbReference>
<dbReference type="InterPro" id="IPR029026">
    <property type="entry name" value="tRNA_m1G_MTases_N"/>
</dbReference>
<dbReference type="NCBIfam" id="NF000985">
    <property type="entry name" value="PRK00103.1-3"/>
    <property type="match status" value="1"/>
</dbReference>
<dbReference type="NCBIfam" id="TIGR00246">
    <property type="entry name" value="tRNA_RlmH_YbeA"/>
    <property type="match status" value="1"/>
</dbReference>
<dbReference type="PANTHER" id="PTHR33603">
    <property type="entry name" value="METHYLTRANSFERASE"/>
    <property type="match status" value="1"/>
</dbReference>
<dbReference type="PANTHER" id="PTHR33603:SF1">
    <property type="entry name" value="RIBOSOMAL RNA LARGE SUBUNIT METHYLTRANSFERASE H"/>
    <property type="match status" value="1"/>
</dbReference>
<dbReference type="Pfam" id="PF02590">
    <property type="entry name" value="SPOUT_MTase"/>
    <property type="match status" value="1"/>
</dbReference>
<dbReference type="PIRSF" id="PIRSF004505">
    <property type="entry name" value="MT_bac"/>
    <property type="match status" value="1"/>
</dbReference>
<dbReference type="SUPFAM" id="SSF75217">
    <property type="entry name" value="alpha/beta knot"/>
    <property type="match status" value="1"/>
</dbReference>
<organism>
    <name type="scientific">Lachnospira eligens (strain ATCC 27750 / DSM 3376 / VPI C15-48 / C15-B4)</name>
    <name type="common">Eubacterium eligens</name>
    <dbReference type="NCBI Taxonomy" id="515620"/>
    <lineage>
        <taxon>Bacteria</taxon>
        <taxon>Bacillati</taxon>
        <taxon>Bacillota</taxon>
        <taxon>Clostridia</taxon>
        <taxon>Lachnospirales</taxon>
        <taxon>Lachnospiraceae</taxon>
        <taxon>Lachnospira</taxon>
    </lineage>
</organism>
<reference key="1">
    <citation type="journal article" date="2009" name="Proc. Natl. Acad. Sci. U.S.A.">
        <title>Characterizing a model human gut microbiota composed of members of its two dominant bacterial phyla.</title>
        <authorList>
            <person name="Mahowald M.A."/>
            <person name="Rey F.E."/>
            <person name="Seedorf H."/>
            <person name="Turnbaugh P.J."/>
            <person name="Fulton R.S."/>
            <person name="Wollam A."/>
            <person name="Shah N."/>
            <person name="Wang C."/>
            <person name="Magrini V."/>
            <person name="Wilson R.K."/>
            <person name="Cantarel B.L."/>
            <person name="Coutinho P.M."/>
            <person name="Henrissat B."/>
            <person name="Crock L.W."/>
            <person name="Russell A."/>
            <person name="Verberkmoes N.C."/>
            <person name="Hettich R.L."/>
            <person name="Gordon J.I."/>
        </authorList>
    </citation>
    <scope>NUCLEOTIDE SEQUENCE [LARGE SCALE GENOMIC DNA]</scope>
    <source>
        <strain>ATCC 27750 / DSM 3376 / VPI C15-48 / C15-B4</strain>
    </source>
</reference>
<feature type="chain" id="PRO_1000212452" description="Ribosomal RNA large subunit methyltransferase H">
    <location>
        <begin position="1"/>
        <end position="159"/>
    </location>
</feature>
<feature type="binding site" evidence="1">
    <location>
        <position position="76"/>
    </location>
    <ligand>
        <name>S-adenosyl-L-methionine</name>
        <dbReference type="ChEBI" id="CHEBI:59789"/>
    </ligand>
</feature>
<feature type="binding site" evidence="1">
    <location>
        <position position="108"/>
    </location>
    <ligand>
        <name>S-adenosyl-L-methionine</name>
        <dbReference type="ChEBI" id="CHEBI:59789"/>
    </ligand>
</feature>
<feature type="binding site" evidence="1">
    <location>
        <begin position="127"/>
        <end position="132"/>
    </location>
    <ligand>
        <name>S-adenosyl-L-methionine</name>
        <dbReference type="ChEBI" id="CHEBI:59789"/>
    </ligand>
</feature>
<protein>
    <recommendedName>
        <fullName evidence="1">Ribosomal RNA large subunit methyltransferase H</fullName>
        <ecNumber evidence="1">2.1.1.177</ecNumber>
    </recommendedName>
    <alternativeName>
        <fullName evidence="1">23S rRNA (pseudouridine1915-N3)-methyltransferase</fullName>
    </alternativeName>
    <alternativeName>
        <fullName evidence="1">23S rRNA m3Psi1915 methyltransferase</fullName>
    </alternativeName>
    <alternativeName>
        <fullName evidence="1">rRNA (pseudouridine-N3-)-methyltransferase RlmH</fullName>
    </alternativeName>
</protein>
<name>RLMH_LACE2</name>
<comment type="function">
    <text evidence="1">Specifically methylates the pseudouridine at position 1915 (m3Psi1915) in 23S rRNA.</text>
</comment>
<comment type="catalytic activity">
    <reaction evidence="1">
        <text>pseudouridine(1915) in 23S rRNA + S-adenosyl-L-methionine = N(3)-methylpseudouridine(1915) in 23S rRNA + S-adenosyl-L-homocysteine + H(+)</text>
        <dbReference type="Rhea" id="RHEA:42752"/>
        <dbReference type="Rhea" id="RHEA-COMP:10221"/>
        <dbReference type="Rhea" id="RHEA-COMP:10222"/>
        <dbReference type="ChEBI" id="CHEBI:15378"/>
        <dbReference type="ChEBI" id="CHEBI:57856"/>
        <dbReference type="ChEBI" id="CHEBI:59789"/>
        <dbReference type="ChEBI" id="CHEBI:65314"/>
        <dbReference type="ChEBI" id="CHEBI:74486"/>
        <dbReference type="EC" id="2.1.1.177"/>
    </reaction>
</comment>
<comment type="subunit">
    <text evidence="1">Homodimer.</text>
</comment>
<comment type="subcellular location">
    <subcellularLocation>
        <location evidence="1">Cytoplasm</location>
    </subcellularLocation>
</comment>
<comment type="similarity">
    <text evidence="1">Belongs to the RNA methyltransferase RlmH family.</text>
</comment>
<proteinExistence type="inferred from homology"/>
<sequence length="159" mass="18126">MRITVVCVGKIKEKFYTQAVDEYSKRLSRYCKLDIVELPDEKTPDNASDVVNEQIKNKEGERILSAIKDDAYVCALAIEGKMLDSVELSEKIDRLGIDGTSNITFVIGGSLGLADAVLKRADYKLSFSKMTFPHQLMRVILLEQIYRAYRIMKNEPYHK</sequence>